<organism>
    <name type="scientific">Homo sapiens</name>
    <name type="common">Human</name>
    <dbReference type="NCBI Taxonomy" id="9606"/>
    <lineage>
        <taxon>Eukaryota</taxon>
        <taxon>Metazoa</taxon>
        <taxon>Chordata</taxon>
        <taxon>Craniata</taxon>
        <taxon>Vertebrata</taxon>
        <taxon>Euteleostomi</taxon>
        <taxon>Mammalia</taxon>
        <taxon>Eutheria</taxon>
        <taxon>Euarchontoglires</taxon>
        <taxon>Primates</taxon>
        <taxon>Haplorrhini</taxon>
        <taxon>Catarrhini</taxon>
        <taxon>Hominidae</taxon>
        <taxon>Homo</taxon>
    </lineage>
</organism>
<accession>P83111</accession>
<accession>P83096</accession>
<gene>
    <name evidence="15" type="primary">LACTB</name>
    <name evidence="9" type="synonym">MRPL56</name>
    <name evidence="10" type="ORF">UNQ843/PRO1781</name>
</gene>
<dbReference type="EC" id="3.4.-.-" evidence="8"/>
<dbReference type="EMBL" id="AK027808">
    <property type="protein sequence ID" value="BAB55384.1"/>
    <property type="molecule type" value="mRNA"/>
</dbReference>
<dbReference type="EMBL" id="AY358709">
    <property type="protein sequence ID" value="AAQ89072.1"/>
    <property type="molecule type" value="mRNA"/>
</dbReference>
<dbReference type="EMBL" id="BC067288">
    <property type="protein sequence ID" value="AAH67288.1"/>
    <property type="molecule type" value="mRNA"/>
</dbReference>
<dbReference type="CCDS" id="CCDS10182.1">
    <molecule id="P83111-1"/>
</dbReference>
<dbReference type="CCDS" id="CCDS45275.1">
    <molecule id="P83111-2"/>
</dbReference>
<dbReference type="RefSeq" id="NP_001275514.1">
    <property type="nucleotide sequence ID" value="NM_001288585.1"/>
</dbReference>
<dbReference type="RefSeq" id="NP_116246.2">
    <molecule id="P83111-1"/>
    <property type="nucleotide sequence ID" value="NM_032857.4"/>
</dbReference>
<dbReference type="RefSeq" id="NP_741982.1">
    <molecule id="P83111-2"/>
    <property type="nucleotide sequence ID" value="NM_171846.4"/>
</dbReference>
<dbReference type="PDB" id="7ULW">
    <property type="method" value="EM"/>
    <property type="resolution" value="3.10 A"/>
    <property type="chains" value="A/B/C/D/E/F=97-547"/>
</dbReference>
<dbReference type="PDB" id="7V1Y">
    <property type="method" value="EM"/>
    <property type="resolution" value="2.82 A"/>
    <property type="chains" value="A/B/C/D=63-547"/>
</dbReference>
<dbReference type="PDB" id="7V1Z">
    <property type="method" value="EM"/>
    <property type="resolution" value="2.98 A"/>
    <property type="chains" value="A/B/C/D=63-547"/>
</dbReference>
<dbReference type="PDB" id="7V21">
    <property type="method" value="EM"/>
    <property type="resolution" value="3.08 A"/>
    <property type="chains" value="A/B/C/D=63-547"/>
</dbReference>
<dbReference type="PDBsum" id="7ULW"/>
<dbReference type="PDBsum" id="7V1Y"/>
<dbReference type="PDBsum" id="7V1Z"/>
<dbReference type="PDBsum" id="7V21"/>
<dbReference type="EMDB" id="EMD-26595"/>
<dbReference type="EMDB" id="EMD-31630"/>
<dbReference type="EMDB" id="EMD-31631"/>
<dbReference type="EMDB" id="EMD-31633"/>
<dbReference type="SMR" id="P83111"/>
<dbReference type="BioGRID" id="125311">
    <property type="interactions" value="315"/>
</dbReference>
<dbReference type="CORUM" id="P83111"/>
<dbReference type="FunCoup" id="P83111">
    <property type="interactions" value="1205"/>
</dbReference>
<dbReference type="IntAct" id="P83111">
    <property type="interactions" value="119"/>
</dbReference>
<dbReference type="MINT" id="P83111"/>
<dbReference type="STRING" id="9606.ENSP00000261893"/>
<dbReference type="DrugCentral" id="P83111"/>
<dbReference type="MEROPS" id="S12.004"/>
<dbReference type="GlyGen" id="P83111">
    <property type="glycosylation" value="1 site, 1 O-linked glycan (1 site)"/>
</dbReference>
<dbReference type="iPTMnet" id="P83111"/>
<dbReference type="PhosphoSitePlus" id="P83111"/>
<dbReference type="SwissPalm" id="P83111"/>
<dbReference type="BioMuta" id="LACTB"/>
<dbReference type="DMDM" id="46397478"/>
<dbReference type="jPOST" id="P83111"/>
<dbReference type="MassIVE" id="P83111"/>
<dbReference type="PaxDb" id="9606-ENSP00000261893"/>
<dbReference type="PeptideAtlas" id="P83111"/>
<dbReference type="ProteomicsDB" id="57733">
    <molecule id="P83111-1"/>
</dbReference>
<dbReference type="ProteomicsDB" id="57734">
    <molecule id="P83111-2"/>
</dbReference>
<dbReference type="Pumba" id="P83111"/>
<dbReference type="Antibodypedia" id="13261">
    <property type="antibodies" value="113 antibodies from 28 providers"/>
</dbReference>
<dbReference type="DNASU" id="114294"/>
<dbReference type="Ensembl" id="ENST00000261893.9">
    <molecule id="P83111-1"/>
    <property type="protein sequence ID" value="ENSP00000261893.4"/>
    <property type="gene ID" value="ENSG00000103642.12"/>
</dbReference>
<dbReference type="Ensembl" id="ENST00000413507.3">
    <molecule id="P83111-2"/>
    <property type="protein sequence ID" value="ENSP00000392956.2"/>
    <property type="gene ID" value="ENSG00000103642.12"/>
</dbReference>
<dbReference type="GeneID" id="114294"/>
<dbReference type="KEGG" id="hsa:114294"/>
<dbReference type="MANE-Select" id="ENST00000261893.9">
    <property type="protein sequence ID" value="ENSP00000261893.4"/>
    <property type="RefSeq nucleotide sequence ID" value="NM_032857.5"/>
    <property type="RefSeq protein sequence ID" value="NP_116246.2"/>
</dbReference>
<dbReference type="UCSC" id="uc002alv.5">
    <molecule id="P83111-1"/>
    <property type="organism name" value="human"/>
</dbReference>
<dbReference type="AGR" id="HGNC:16468"/>
<dbReference type="CTD" id="114294"/>
<dbReference type="DisGeNET" id="114294"/>
<dbReference type="GeneCards" id="LACTB"/>
<dbReference type="HGNC" id="HGNC:16468">
    <property type="gene designation" value="LACTB"/>
</dbReference>
<dbReference type="HPA" id="ENSG00000103642">
    <property type="expression patterns" value="Low tissue specificity"/>
</dbReference>
<dbReference type="MalaCards" id="LACTB"/>
<dbReference type="MIM" id="608440">
    <property type="type" value="gene"/>
</dbReference>
<dbReference type="neXtProt" id="NX_P83111"/>
<dbReference type="OpenTargets" id="ENSG00000103642"/>
<dbReference type="PharmGKB" id="PA30262"/>
<dbReference type="VEuPathDB" id="HostDB:ENSG00000103642"/>
<dbReference type="eggNOG" id="ENOG502QQBX">
    <property type="taxonomic scope" value="Eukaryota"/>
</dbReference>
<dbReference type="GeneTree" id="ENSGT00390000001062"/>
<dbReference type="HOGENOM" id="CLU_020027_6_0_1"/>
<dbReference type="InParanoid" id="P83111"/>
<dbReference type="OMA" id="CCRQQRH"/>
<dbReference type="OrthoDB" id="5946976at2759"/>
<dbReference type="PAN-GO" id="P83111">
    <property type="GO annotations" value="4 GO annotations based on evolutionary models"/>
</dbReference>
<dbReference type="PhylomeDB" id="P83111"/>
<dbReference type="TreeFam" id="TF315050"/>
<dbReference type="PathwayCommons" id="P83111"/>
<dbReference type="SignaLink" id="P83111"/>
<dbReference type="BioGRID-ORCS" id="114294">
    <property type="hits" value="16 hits in 1154 CRISPR screens"/>
</dbReference>
<dbReference type="ChiTaRS" id="LACTB">
    <property type="organism name" value="human"/>
</dbReference>
<dbReference type="GeneWiki" id="LACTB"/>
<dbReference type="GenomeRNAi" id="114294"/>
<dbReference type="Pharos" id="P83111">
    <property type="development level" value="Tbio"/>
</dbReference>
<dbReference type="PRO" id="PR:P83111"/>
<dbReference type="Proteomes" id="UP000005640">
    <property type="component" value="Chromosome 15"/>
</dbReference>
<dbReference type="RNAct" id="P83111">
    <property type="molecule type" value="protein"/>
</dbReference>
<dbReference type="Bgee" id="ENSG00000103642">
    <property type="expression patterns" value="Expressed in left ventricle myocardium and 182 other cell types or tissues"/>
</dbReference>
<dbReference type="ExpressionAtlas" id="P83111">
    <property type="expression patterns" value="baseline and differential"/>
</dbReference>
<dbReference type="GO" id="GO:0005829">
    <property type="term" value="C:cytosol"/>
    <property type="evidence" value="ECO:0000314"/>
    <property type="project" value="HPA"/>
</dbReference>
<dbReference type="GO" id="GO:0005739">
    <property type="term" value="C:mitochondrion"/>
    <property type="evidence" value="ECO:0000314"/>
    <property type="project" value="HPA"/>
</dbReference>
<dbReference type="GO" id="GO:0042802">
    <property type="term" value="F:identical protein binding"/>
    <property type="evidence" value="ECO:0007669"/>
    <property type="project" value="Ensembl"/>
</dbReference>
<dbReference type="GO" id="GO:0008233">
    <property type="term" value="F:peptidase activity"/>
    <property type="evidence" value="ECO:0000314"/>
    <property type="project" value="UniProtKB"/>
</dbReference>
<dbReference type="GO" id="GO:0006629">
    <property type="term" value="P:lipid metabolic process"/>
    <property type="evidence" value="ECO:0007669"/>
    <property type="project" value="UniProtKB-KW"/>
</dbReference>
<dbReference type="GO" id="GO:0006508">
    <property type="term" value="P:proteolysis"/>
    <property type="evidence" value="ECO:0000314"/>
    <property type="project" value="UniProtKB"/>
</dbReference>
<dbReference type="GO" id="GO:0019216">
    <property type="term" value="P:regulation of lipid metabolic process"/>
    <property type="evidence" value="ECO:0000314"/>
    <property type="project" value="UniProtKB"/>
</dbReference>
<dbReference type="FunFam" id="3.40.710.10:FF:000015">
    <property type="entry name" value="Serine beta-lactamase-like protein LACTB, mitochondrial"/>
    <property type="match status" value="1"/>
</dbReference>
<dbReference type="FunFam" id="3.40.710.10:FF:000016">
    <property type="entry name" value="serine beta-lactamase-like protein LACTB, mitochondrial"/>
    <property type="match status" value="1"/>
</dbReference>
<dbReference type="Gene3D" id="3.40.710.10">
    <property type="entry name" value="DD-peptidase/beta-lactamase superfamily"/>
    <property type="match status" value="2"/>
</dbReference>
<dbReference type="InterPro" id="IPR001466">
    <property type="entry name" value="Beta-lactam-related"/>
</dbReference>
<dbReference type="InterPro" id="IPR012338">
    <property type="entry name" value="Beta-lactam/transpept-like"/>
</dbReference>
<dbReference type="InterPro" id="IPR052794">
    <property type="entry name" value="Mito_Ser_Protease_LACTB"/>
</dbReference>
<dbReference type="PANTHER" id="PTHR46520">
    <property type="entry name" value="SERINE BETA-LACTAMASE-LIKE PROTEIN LACTB, MITOCHONDRIAL"/>
    <property type="match status" value="1"/>
</dbReference>
<dbReference type="PANTHER" id="PTHR46520:SF1">
    <property type="entry name" value="SERINE BETA-LACTAMASE-LIKE PROTEIN LACTB, MITOCHONDRIAL"/>
    <property type="match status" value="1"/>
</dbReference>
<dbReference type="Pfam" id="PF00144">
    <property type="entry name" value="Beta-lactamase"/>
    <property type="match status" value="1"/>
</dbReference>
<dbReference type="SUPFAM" id="SSF56601">
    <property type="entry name" value="beta-lactamase/transpeptidase-like"/>
    <property type="match status" value="1"/>
</dbReference>
<comment type="function">
    <text evidence="8">Mitochondrial serine protease that acts as a regulator of mitochondrial lipid metabolism (PubMed:28329758). Acts by decreasing protein levels of PISD, a mitochondrial enzyme that converts phosphatidylserine (PtdSer) to phosphatidylethanolamine (PtdEtn), thereby affecting mitochondrial lipid metabolism (PubMed:28329758). It is unclear whether it acts directly by mediating proteolysis of PISD or by mediating proteolysis of another lipid metabolism protein (PubMed:28329758). Acts as a tumor suppressor that has the ability to inhibit proliferation of multiple types of breast cancer cells: probably by promoting decreased levels of PISD, thereby affecting mitochondrial lipid metabolism (PubMed:28329758).</text>
</comment>
<comment type="interaction">
    <interactant intactId="EBI-2878119">
        <id>P83111</id>
    </interactant>
    <interactant intactId="EBI-11098815">
        <id>Q96A19</id>
        <label>CCDC102A</label>
    </interactant>
    <organismsDiffer>false</organismsDiffer>
    <experiments>2</experiments>
</comment>
<comment type="subcellular location">
    <subcellularLocation>
        <location evidence="5 7 8">Mitochondrion</location>
    </subcellularLocation>
</comment>
<comment type="alternative products">
    <event type="alternative splicing"/>
    <isoform>
        <id>P83111-1</id>
        <name>1</name>
        <name>a</name>
        <sequence type="displayed"/>
    </isoform>
    <isoform>
        <id>P83111-2</id>
        <name>2</name>
        <sequence type="described" ref="VSP_010011"/>
    </isoform>
</comment>
<comment type="tissue specificity">
    <text evidence="6">Expressed predominantly in skeletal muscle.</text>
</comment>
<comment type="induction">
    <text evidence="8">Down-regulated in a number of cancer cells.</text>
</comment>
<comment type="similarity">
    <text evidence="12">Belongs to the peptidase S12 family.</text>
</comment>
<comment type="caution">
    <text evidence="13 14">Was originally identified as mitochondrial large ribosomal subunit protein mL56 (MRP-L56) (PubMed:11551941), but has since been shown to localize to the mitochondrial intermembrane space where it forms filaments (PubMed:19858488).</text>
</comment>
<reference key="1">
    <citation type="journal article" date="2003" name="Genome Res.">
        <title>The secreted protein discovery initiative (SPDI), a large-scale effort to identify novel human secreted and transmembrane proteins: a bioinformatics assessment.</title>
        <authorList>
            <person name="Clark H.F."/>
            <person name="Gurney A.L."/>
            <person name="Abaya E."/>
            <person name="Baker K."/>
            <person name="Baldwin D.T."/>
            <person name="Brush J."/>
            <person name="Chen J."/>
            <person name="Chow B."/>
            <person name="Chui C."/>
            <person name="Crowley C."/>
            <person name="Currell B."/>
            <person name="Deuel B."/>
            <person name="Dowd P."/>
            <person name="Eaton D."/>
            <person name="Foster J.S."/>
            <person name="Grimaldi C."/>
            <person name="Gu Q."/>
            <person name="Hass P.E."/>
            <person name="Heldens S."/>
            <person name="Huang A."/>
            <person name="Kim H.S."/>
            <person name="Klimowski L."/>
            <person name="Jin Y."/>
            <person name="Johnson S."/>
            <person name="Lee J."/>
            <person name="Lewis L."/>
            <person name="Liao D."/>
            <person name="Mark M.R."/>
            <person name="Robbie E."/>
            <person name="Sanchez C."/>
            <person name="Schoenfeld J."/>
            <person name="Seshagiri S."/>
            <person name="Simmons L."/>
            <person name="Singh J."/>
            <person name="Smith V."/>
            <person name="Stinson J."/>
            <person name="Vagts A."/>
            <person name="Vandlen R.L."/>
            <person name="Watanabe C."/>
            <person name="Wieand D."/>
            <person name="Woods K."/>
            <person name="Xie M.-H."/>
            <person name="Yansura D.G."/>
            <person name="Yi S."/>
            <person name="Yu G."/>
            <person name="Yuan J."/>
            <person name="Zhang M."/>
            <person name="Zhang Z."/>
            <person name="Goddard A.D."/>
            <person name="Wood W.I."/>
            <person name="Godowski P.J."/>
            <person name="Gray A.M."/>
        </authorList>
    </citation>
    <scope>NUCLEOTIDE SEQUENCE [LARGE SCALE MRNA] (ISOFORM 2)</scope>
</reference>
<reference key="2">
    <citation type="journal article" date="2004" name="Nat. Genet.">
        <title>Complete sequencing and characterization of 21,243 full-length human cDNAs.</title>
        <authorList>
            <person name="Ota T."/>
            <person name="Suzuki Y."/>
            <person name="Nishikawa T."/>
            <person name="Otsuki T."/>
            <person name="Sugiyama T."/>
            <person name="Irie R."/>
            <person name="Wakamatsu A."/>
            <person name="Hayashi K."/>
            <person name="Sato H."/>
            <person name="Nagai K."/>
            <person name="Kimura K."/>
            <person name="Makita H."/>
            <person name="Sekine M."/>
            <person name="Obayashi M."/>
            <person name="Nishi T."/>
            <person name="Shibahara T."/>
            <person name="Tanaka T."/>
            <person name="Ishii S."/>
            <person name="Yamamoto J."/>
            <person name="Saito K."/>
            <person name="Kawai Y."/>
            <person name="Isono Y."/>
            <person name="Nakamura Y."/>
            <person name="Nagahari K."/>
            <person name="Murakami K."/>
            <person name="Yasuda T."/>
            <person name="Iwayanagi T."/>
            <person name="Wagatsuma M."/>
            <person name="Shiratori A."/>
            <person name="Sudo H."/>
            <person name="Hosoiri T."/>
            <person name="Kaku Y."/>
            <person name="Kodaira H."/>
            <person name="Kondo H."/>
            <person name="Sugawara M."/>
            <person name="Takahashi M."/>
            <person name="Kanda K."/>
            <person name="Yokoi T."/>
            <person name="Furuya T."/>
            <person name="Kikkawa E."/>
            <person name="Omura Y."/>
            <person name="Abe K."/>
            <person name="Kamihara K."/>
            <person name="Katsuta N."/>
            <person name="Sato K."/>
            <person name="Tanikawa M."/>
            <person name="Yamazaki M."/>
            <person name="Ninomiya K."/>
            <person name="Ishibashi T."/>
            <person name="Yamashita H."/>
            <person name="Murakawa K."/>
            <person name="Fujimori K."/>
            <person name="Tanai H."/>
            <person name="Kimata M."/>
            <person name="Watanabe M."/>
            <person name="Hiraoka S."/>
            <person name="Chiba Y."/>
            <person name="Ishida S."/>
            <person name="Ono Y."/>
            <person name="Takiguchi S."/>
            <person name="Watanabe S."/>
            <person name="Yosida M."/>
            <person name="Hotuta T."/>
            <person name="Kusano J."/>
            <person name="Kanehori K."/>
            <person name="Takahashi-Fujii A."/>
            <person name="Hara H."/>
            <person name="Tanase T.-O."/>
            <person name="Nomura Y."/>
            <person name="Togiya S."/>
            <person name="Komai F."/>
            <person name="Hara R."/>
            <person name="Takeuchi K."/>
            <person name="Arita M."/>
            <person name="Imose N."/>
            <person name="Musashino K."/>
            <person name="Yuuki H."/>
            <person name="Oshima A."/>
            <person name="Sasaki N."/>
            <person name="Aotsuka S."/>
            <person name="Yoshikawa Y."/>
            <person name="Matsunawa H."/>
            <person name="Ichihara T."/>
            <person name="Shiohata N."/>
            <person name="Sano S."/>
            <person name="Moriya S."/>
            <person name="Momiyama H."/>
            <person name="Satoh N."/>
            <person name="Takami S."/>
            <person name="Terashima Y."/>
            <person name="Suzuki O."/>
            <person name="Nakagawa S."/>
            <person name="Senoh A."/>
            <person name="Mizoguchi H."/>
            <person name="Goto Y."/>
            <person name="Shimizu F."/>
            <person name="Wakebe H."/>
            <person name="Hishigaki H."/>
            <person name="Watanabe T."/>
            <person name="Sugiyama A."/>
            <person name="Takemoto M."/>
            <person name="Kawakami B."/>
            <person name="Yamazaki M."/>
            <person name="Watanabe K."/>
            <person name="Kumagai A."/>
            <person name="Itakura S."/>
            <person name="Fukuzumi Y."/>
            <person name="Fujimori Y."/>
            <person name="Komiyama M."/>
            <person name="Tashiro H."/>
            <person name="Tanigami A."/>
            <person name="Fujiwara T."/>
            <person name="Ono T."/>
            <person name="Yamada K."/>
            <person name="Fujii Y."/>
            <person name="Ozaki K."/>
            <person name="Hirao M."/>
            <person name="Ohmori Y."/>
            <person name="Kawabata A."/>
            <person name="Hikiji T."/>
            <person name="Kobatake N."/>
            <person name="Inagaki H."/>
            <person name="Ikema Y."/>
            <person name="Okamoto S."/>
            <person name="Okitani R."/>
            <person name="Kawakami T."/>
            <person name="Noguchi S."/>
            <person name="Itoh T."/>
            <person name="Shigeta K."/>
            <person name="Senba T."/>
            <person name="Matsumura K."/>
            <person name="Nakajima Y."/>
            <person name="Mizuno T."/>
            <person name="Morinaga M."/>
            <person name="Sasaki M."/>
            <person name="Togashi T."/>
            <person name="Oyama M."/>
            <person name="Hata H."/>
            <person name="Watanabe M."/>
            <person name="Komatsu T."/>
            <person name="Mizushima-Sugano J."/>
            <person name="Satoh T."/>
            <person name="Shirai Y."/>
            <person name="Takahashi Y."/>
            <person name="Nakagawa K."/>
            <person name="Okumura K."/>
            <person name="Nagase T."/>
            <person name="Nomura N."/>
            <person name="Kikuchi H."/>
            <person name="Masuho Y."/>
            <person name="Yamashita R."/>
            <person name="Nakai K."/>
            <person name="Yada T."/>
            <person name="Nakamura Y."/>
            <person name="Ohara O."/>
            <person name="Isogai T."/>
            <person name="Sugano S."/>
        </authorList>
    </citation>
    <scope>NUCLEOTIDE SEQUENCE [LARGE SCALE MRNA] (ISOFORM 2)</scope>
    <source>
        <tissue>Placenta</tissue>
    </source>
</reference>
<reference key="3">
    <citation type="journal article" date="2004" name="Genome Res.">
        <title>The status, quality, and expansion of the NIH full-length cDNA project: the Mammalian Gene Collection (MGC).</title>
        <authorList>
            <consortium name="The MGC Project Team"/>
        </authorList>
    </citation>
    <scope>NUCLEOTIDE SEQUENCE [LARGE SCALE MRNA] (ISOFORM 1)</scope>
    <source>
        <tissue>Pituitary</tissue>
    </source>
</reference>
<reference key="4">
    <citation type="journal article" date="2001" name="J. Biol. Chem.">
        <title>The large subunit of the mammalian mitochondrial ribosome. Analysis of the complement of ribosomal proteins present.</title>
        <authorList>
            <person name="Koc E.C."/>
            <person name="Burkhart W."/>
            <person name="Blackburn K."/>
            <person name="Moyer M.B."/>
            <person name="Schlatzer D.M."/>
            <person name="Moseley A."/>
            <person name="Spremulli L.L."/>
        </authorList>
    </citation>
    <scope>IDENTIFICATION</scope>
    <scope>SUBCELLULAR LOCATION</scope>
    <scope>CONCEPTUAL TRANSLATION</scope>
</reference>
<reference key="5">
    <citation type="journal article" date="2001" name="Genomics">
        <title>Identification, genomic organization, and mRNA expression of LACTB, encoding a serine beta-lactamase-like protein with an amino-terminal transmembrane domain.</title>
        <authorList>
            <person name="Smith T.S."/>
            <person name="Southan C."/>
            <person name="Ellington K."/>
            <person name="Campbell D."/>
            <person name="Tew D.G."/>
            <person name="Debouck C."/>
        </authorList>
    </citation>
    <scope>IDENTIFICATION</scope>
    <scope>CONCEPTUAL TRANSLATION</scope>
    <scope>TISSUE SPECIFICITY</scope>
</reference>
<reference key="6">
    <citation type="journal article" date="2009" name="Proc. Natl. Acad. Sci. U.S.A.">
        <title>LACTB is a filament-forming protein localized in mitochondria.</title>
        <authorList>
            <person name="Polianskyte Z."/>
            <person name="Peitsaro N."/>
            <person name="Dapkunas A."/>
            <person name="Liobikas J."/>
            <person name="Soliymani R."/>
            <person name="Lalowski M."/>
            <person name="Speer O."/>
            <person name="Seitsonen J."/>
            <person name="Butcher S."/>
            <person name="Cereghetti G.M."/>
            <person name="Linder M.D."/>
            <person name="Merckel M."/>
            <person name="Thompson J."/>
            <person name="Eriksson O."/>
        </authorList>
    </citation>
    <scope>SUBCELLULAR LOCATION</scope>
</reference>
<reference key="7">
    <citation type="journal article" date="2009" name="Science">
        <title>Lysine acetylation targets protein complexes and co-regulates major cellular functions.</title>
        <authorList>
            <person name="Choudhary C."/>
            <person name="Kumar C."/>
            <person name="Gnad F."/>
            <person name="Nielsen M.L."/>
            <person name="Rehman M."/>
            <person name="Walther T.C."/>
            <person name="Olsen J.V."/>
            <person name="Mann M."/>
        </authorList>
    </citation>
    <scope>ACETYLATION [LARGE SCALE ANALYSIS] AT LYS-342</scope>
    <scope>IDENTIFICATION BY MASS SPECTROMETRY [LARGE SCALE ANALYSIS]</scope>
</reference>
<reference key="8">
    <citation type="journal article" date="2014" name="J. Proteomics">
        <title>An enzyme assisted RP-RPLC approach for in-depth analysis of human liver phosphoproteome.</title>
        <authorList>
            <person name="Bian Y."/>
            <person name="Song C."/>
            <person name="Cheng K."/>
            <person name="Dong M."/>
            <person name="Wang F."/>
            <person name="Huang J."/>
            <person name="Sun D."/>
            <person name="Wang L."/>
            <person name="Ye M."/>
            <person name="Zou H."/>
        </authorList>
    </citation>
    <scope>IDENTIFICATION BY MASS SPECTROMETRY [LARGE SCALE ANALYSIS]</scope>
    <source>
        <tissue>Liver</tissue>
    </source>
</reference>
<reference key="9">
    <citation type="journal article" date="2015" name="Proteomics">
        <title>N-terminome analysis of the human mitochondrial proteome.</title>
        <authorList>
            <person name="Vaca Jacome A.S."/>
            <person name="Rabilloud T."/>
            <person name="Schaeffer-Reiss C."/>
            <person name="Rompais M."/>
            <person name="Ayoub D."/>
            <person name="Lane L."/>
            <person name="Bairoch A."/>
            <person name="Van Dorsselaer A."/>
            <person name="Carapito C."/>
        </authorList>
    </citation>
    <scope>IDENTIFICATION BY MASS SPECTROMETRY [LARGE SCALE ANALYSIS]</scope>
</reference>
<reference key="10">
    <citation type="journal article" date="2017" name="Nature">
        <title>LACTB is a tumour suppressor that modulates lipid metabolism and cell state.</title>
        <authorList>
            <person name="Keckesova Z."/>
            <person name="Donaher J.L."/>
            <person name="De Cock J."/>
            <person name="Freinkman E."/>
            <person name="Lingrell S."/>
            <person name="Bachovchin D.A."/>
            <person name="Bierie B."/>
            <person name="Tischler V."/>
            <person name="Noske A."/>
            <person name="Okondo M.C."/>
            <person name="Reinhardt F."/>
            <person name="Thiru P."/>
            <person name="Golub T.R."/>
            <person name="Vance J.E."/>
            <person name="Weinberg R.A."/>
        </authorList>
    </citation>
    <scope>FUNCTION</scope>
    <scope>SUBCELLULAR LOCATION</scope>
    <scope>INDUCTION</scope>
    <scope>VARIANT LYS-469</scope>
    <scope>CHARACTERIZATION OF VARIANT LYS-469</scope>
</reference>
<evidence type="ECO:0000250" key="1">
    <source>
        <dbReference type="UniProtKB" id="P15555"/>
    </source>
</evidence>
<evidence type="ECO:0000250" key="2">
    <source>
        <dbReference type="UniProtKB" id="Q9EP89"/>
    </source>
</evidence>
<evidence type="ECO:0000255" key="3"/>
<evidence type="ECO:0000256" key="4">
    <source>
        <dbReference type="SAM" id="MobiDB-lite"/>
    </source>
</evidence>
<evidence type="ECO:0000269" key="5">
    <source>
    </source>
</evidence>
<evidence type="ECO:0000269" key="6">
    <source>
    </source>
</evidence>
<evidence type="ECO:0000269" key="7">
    <source>
    </source>
</evidence>
<evidence type="ECO:0000269" key="8">
    <source>
    </source>
</evidence>
<evidence type="ECO:0000303" key="9">
    <source>
    </source>
</evidence>
<evidence type="ECO:0000303" key="10">
    <source>
    </source>
</evidence>
<evidence type="ECO:0000303" key="11">
    <source>
    </source>
</evidence>
<evidence type="ECO:0000305" key="12"/>
<evidence type="ECO:0000305" key="13">
    <source>
    </source>
</evidence>
<evidence type="ECO:0000305" key="14">
    <source>
    </source>
</evidence>
<evidence type="ECO:0000312" key="15">
    <source>
        <dbReference type="HGNC" id="HGNC:16468"/>
    </source>
</evidence>
<evidence type="ECO:0007744" key="16">
    <source>
    </source>
</evidence>
<evidence type="ECO:0007829" key="17">
    <source>
        <dbReference type="PDB" id="7ULW"/>
    </source>
</evidence>
<evidence type="ECO:0007829" key="18">
    <source>
        <dbReference type="PDB" id="7V1Y"/>
    </source>
</evidence>
<evidence type="ECO:0007829" key="19">
    <source>
        <dbReference type="PDB" id="7V1Z"/>
    </source>
</evidence>
<evidence type="ECO:0007829" key="20">
    <source>
        <dbReference type="PDB" id="7V21"/>
    </source>
</evidence>
<keyword id="KW-0002">3D-structure</keyword>
<keyword id="KW-0007">Acetylation</keyword>
<keyword id="KW-0025">Alternative splicing</keyword>
<keyword id="KW-0378">Hydrolase</keyword>
<keyword id="KW-0443">Lipid metabolism</keyword>
<keyword id="KW-0496">Mitochondrion</keyword>
<keyword id="KW-0645">Protease</keyword>
<keyword id="KW-1267">Proteomics identification</keyword>
<keyword id="KW-1185">Reference proteome</keyword>
<keyword id="KW-0809">Transit peptide</keyword>
<keyword id="KW-0043">Tumor suppressor</keyword>
<name>LACTB_HUMAN</name>
<sequence>MYRLMSAVTARAAAPGGLASSCGRRGVHQRAGLPPLGHGWVGGLGLGLGLALGVKLAGGLRGAAPAQSPAAPDPEASPLAEPPQEQSLAPWSPQTPAPPCSRCFARAIESSRDLLHRIKDEVGAPGIVVGVSVDGKEVWSEGLGYADVENRVPCKPETVMRIASISKSLTMVALAKLWEAGKLDLDIPVQHYVPEFPEKEYEGEKVSVTTRLLISHLSGIRHYEKDIKKVKEEKAYKALKMMKENVAFEQEKEGKSNEKNDFTKFKTEQENEAKCRNSKPGKKKNDFEQGELYLREKFENSIESLRLFKNDPLFFKPGSQFLYSTFGYTLLAAIVERASGCKYLDYMQKIFHDLDMLTTVQEENEPVIYNRARFYVYNKKKRLVNTPYVDNSYKWAGGGFLSTVGDLLKFGNAMLYGYQVGLFKNSNENLLPGYLKPETMVMMWTPVPNTEMSWDKEGKYAMAWGVVERKQTYGSCRKQRHYASHTGGAVGASSVLLVLPEELDTETINNKVPPRGIIVSIICNMQSVGLNSTALKIALEFDKDRSD</sequence>
<proteinExistence type="evidence at protein level"/>
<feature type="transit peptide" description="Mitochondrion" evidence="3">
    <location>
        <begin position="1"/>
        <end position="115"/>
    </location>
</feature>
<feature type="chain" id="PRO_0000195476" description="Serine beta-lactamase-like protein LACTB, mitochondrial">
    <location>
        <begin position="116"/>
        <end position="547"/>
    </location>
</feature>
<feature type="region of interest" description="Disordered" evidence="4">
    <location>
        <begin position="62"/>
        <end position="96"/>
    </location>
</feature>
<feature type="compositionally biased region" description="Low complexity" evidence="4">
    <location>
        <begin position="62"/>
        <end position="83"/>
    </location>
</feature>
<feature type="active site" description="Acyl-ester intermediate" evidence="1">
    <location>
        <position position="164"/>
    </location>
</feature>
<feature type="modified residue" description="N6-succinyllysine" evidence="2">
    <location>
        <position position="283"/>
    </location>
</feature>
<feature type="modified residue" description="N6-succinyllysine" evidence="2">
    <location>
        <position position="284"/>
    </location>
</feature>
<feature type="modified residue" description="N6-acetyllysine" evidence="2">
    <location>
        <position position="297"/>
    </location>
</feature>
<feature type="modified residue" description="N6-acetyllysine" evidence="16">
    <location>
        <position position="342"/>
    </location>
</feature>
<feature type="splice variant" id="VSP_010011" description="In isoform 2." evidence="10 11">
    <location>
        <begin position="374"/>
        <end position="547"/>
    </location>
</feature>
<feature type="sequence variant" id="VAR_018299" description="Does not affect serine protease activity; shows reduced tumor suppressor activity; shows reduced ability to down-regulate phosphatidylethanolamine (PtdEtn) levels; dbSNP:rs2729835." evidence="8">
    <original>R</original>
    <variation>K</variation>
    <location>
        <position position="469"/>
    </location>
</feature>
<feature type="sequence conflict" description="In Ref. 2; BAB55384." evidence="12" ref="2">
    <original>R</original>
    <variation>S</variation>
    <location>
        <position position="61"/>
    </location>
</feature>
<feature type="helix" evidence="17">
    <location>
        <begin position="100"/>
        <end position="103"/>
    </location>
</feature>
<feature type="helix" evidence="18">
    <location>
        <begin position="105"/>
        <end position="122"/>
    </location>
</feature>
<feature type="strand" evidence="18">
    <location>
        <begin position="125"/>
        <end position="133"/>
    </location>
</feature>
<feature type="strand" evidence="18">
    <location>
        <begin position="136"/>
        <end position="147"/>
    </location>
</feature>
<feature type="turn" evidence="18">
    <location>
        <begin position="148"/>
        <end position="151"/>
    </location>
</feature>
<feature type="strand" evidence="19">
    <location>
        <begin position="159"/>
        <end position="164"/>
    </location>
</feature>
<feature type="helix" evidence="18">
    <location>
        <begin position="166"/>
        <end position="179"/>
    </location>
</feature>
<feature type="strand" evidence="18">
    <location>
        <begin position="185"/>
        <end position="188"/>
    </location>
</feature>
<feature type="helix" evidence="18">
    <location>
        <begin position="189"/>
        <end position="191"/>
    </location>
</feature>
<feature type="strand" evidence="18">
    <location>
        <begin position="200"/>
        <end position="203"/>
    </location>
</feature>
<feature type="strand" evidence="20">
    <location>
        <begin position="204"/>
        <end position="206"/>
    </location>
</feature>
<feature type="helix" evidence="18">
    <location>
        <begin position="210"/>
        <end position="214"/>
    </location>
</feature>
<feature type="helix" evidence="18">
    <location>
        <begin position="227"/>
        <end position="234"/>
    </location>
</feature>
<feature type="helix" evidence="18">
    <location>
        <begin position="291"/>
        <end position="293"/>
    </location>
</feature>
<feature type="helix" evidence="18">
    <location>
        <begin position="301"/>
        <end position="304"/>
    </location>
</feature>
<feature type="helix" evidence="18">
    <location>
        <begin position="305"/>
        <end position="307"/>
    </location>
</feature>
<feature type="turn" evidence="18">
    <location>
        <begin position="308"/>
        <end position="310"/>
    </location>
</feature>
<feature type="turn" evidence="18">
    <location>
        <begin position="317"/>
        <end position="319"/>
    </location>
</feature>
<feature type="helix" evidence="18">
    <location>
        <begin position="326"/>
        <end position="339"/>
    </location>
</feature>
<feature type="helix" evidence="18">
    <location>
        <begin position="343"/>
        <end position="353"/>
    </location>
</feature>
<feature type="strand" evidence="18">
    <location>
        <begin position="364"/>
        <end position="366"/>
    </location>
</feature>
<feature type="strand" evidence="18">
    <location>
        <begin position="375"/>
        <end position="377"/>
    </location>
</feature>
<feature type="strand" evidence="18">
    <location>
        <begin position="383"/>
        <end position="385"/>
    </location>
</feature>
<feature type="helix" evidence="19">
    <location>
        <begin position="392"/>
        <end position="394"/>
    </location>
</feature>
<feature type="helix" evidence="18">
    <location>
        <begin position="395"/>
        <end position="398"/>
    </location>
</feature>
<feature type="strand" evidence="18">
    <location>
        <begin position="400"/>
        <end position="402"/>
    </location>
</feature>
<feature type="helix" evidence="18">
    <location>
        <begin position="404"/>
        <end position="423"/>
    </location>
</feature>
<feature type="turn" evidence="18">
    <location>
        <begin position="424"/>
        <end position="426"/>
    </location>
</feature>
<feature type="helix" evidence="18">
    <location>
        <begin position="437"/>
        <end position="443"/>
    </location>
</feature>
<feature type="strand" evidence="18">
    <location>
        <begin position="447"/>
        <end position="449"/>
    </location>
</feature>
<feature type="strand" evidence="18">
    <location>
        <begin position="458"/>
        <end position="460"/>
    </location>
</feature>
<feature type="strand" evidence="18">
    <location>
        <begin position="462"/>
        <end position="467"/>
    </location>
</feature>
<feature type="strand" evidence="18">
    <location>
        <begin position="482"/>
        <end position="489"/>
    </location>
</feature>
<feature type="strand" evidence="18">
    <location>
        <begin position="492"/>
        <end position="500"/>
    </location>
</feature>
<feature type="helix" evidence="18">
    <location>
        <begin position="505"/>
        <end position="510"/>
    </location>
</feature>
<feature type="strand" evidence="18">
    <location>
        <begin position="516"/>
        <end position="527"/>
    </location>
</feature>
<feature type="helix" evidence="18">
    <location>
        <begin position="531"/>
        <end position="544"/>
    </location>
</feature>
<protein>
    <recommendedName>
        <fullName evidence="12">Serine beta-lactamase-like protein LACTB, mitochondrial</fullName>
        <ecNumber evidence="8">3.4.-.-</ecNumber>
    </recommendedName>
</protein>